<accession>P27560</accession>
<sequence length="236" mass="26591">DPNLKYGGTDIAVIGPPSRDKFLRLNFQSSRGTVSLGLKRENLYVVAYLAMDNANVNRAYYFGTEITSAELTTLLPEATVANQKALEYTEDYQSIEKNAKITEGDKTRKELGLGINLLSTLMDAVNKKARVVKNEARFLLIAIQMTAEAARFRYIQNLVTKNFPNKFNSEDKVIQFQVNWSKISKAIYGDAKNGVFNKDYDFGFGKVRQVKDLQMGLLMYLGTTPNNAADRYRAEL</sequence>
<gene>
    <name type="primary">SAP3</name>
</gene>
<reference key="1">
    <citation type="journal article" date="1991" name="Mol. Gen. Genet.">
        <title>Characterisation of saporin genes: in vitro expression and ribosome inactivation.</title>
        <authorList>
            <person name="Fordham-Skelton A.P."/>
            <person name="Taylor P.E."/>
            <person name="Hartley M.R."/>
            <person name="Croy R.R.D."/>
        </authorList>
    </citation>
    <scope>NUCLEOTIDE SEQUENCE [GENOMIC DNA]</scope>
</reference>
<evidence type="ECO:0000250" key="1"/>
<evidence type="ECO:0000305" key="2"/>
<comment type="function">
    <text>Ribosome-inactivating protein of type 1, inhibits protein synthesis in animal cells. Useful as immunotoxin for pharmacological applications.</text>
</comment>
<comment type="catalytic activity">
    <reaction>
        <text>Endohydrolysis of the N-glycosidic bond at one specific adenosine on the 28S rRNA.</text>
        <dbReference type="EC" id="3.2.2.22"/>
    </reaction>
</comment>
<comment type="similarity">
    <text evidence="2">Belongs to the ribosome-inactivating protein family. Type 1 RIP subfamily.</text>
</comment>
<proteinExistence type="inferred from homology"/>
<feature type="chain" id="PRO_0000221412" description="Ribosome-inactivating protein saporin-3">
    <location>
        <begin position="1" status="less than"/>
        <end position="236"/>
    </location>
</feature>
<feature type="active site" evidence="1">
    <location>
        <position position="148"/>
    </location>
</feature>
<feature type="non-terminal residue">
    <location>
        <position position="1"/>
    </location>
</feature>
<name>RIP3_SAPOF</name>
<dbReference type="EC" id="3.2.2.22"/>
<dbReference type="EMBL" id="X59256">
    <property type="protein sequence ID" value="CAA41949.1"/>
    <property type="molecule type" value="Genomic_DNA"/>
</dbReference>
<dbReference type="PIR" id="S17932">
    <property type="entry name" value="S17932"/>
</dbReference>
<dbReference type="SMR" id="P27560"/>
<dbReference type="Allergome" id="2805">
    <property type="allergen name" value="Sap o RIP"/>
</dbReference>
<dbReference type="GO" id="GO:0030598">
    <property type="term" value="F:rRNA N-glycosylase activity"/>
    <property type="evidence" value="ECO:0007669"/>
    <property type="project" value="UniProtKB-EC"/>
</dbReference>
<dbReference type="GO" id="GO:0090729">
    <property type="term" value="F:toxin activity"/>
    <property type="evidence" value="ECO:0007669"/>
    <property type="project" value="UniProtKB-KW"/>
</dbReference>
<dbReference type="GO" id="GO:0006952">
    <property type="term" value="P:defense response"/>
    <property type="evidence" value="ECO:0007669"/>
    <property type="project" value="UniProtKB-KW"/>
</dbReference>
<dbReference type="GO" id="GO:0017148">
    <property type="term" value="P:negative regulation of translation"/>
    <property type="evidence" value="ECO:0007669"/>
    <property type="project" value="UniProtKB-KW"/>
</dbReference>
<dbReference type="Gene3D" id="3.40.420.10">
    <property type="entry name" value="Ricin (A subunit), domain 1"/>
    <property type="match status" value="1"/>
</dbReference>
<dbReference type="Gene3D" id="4.10.470.10">
    <property type="entry name" value="Ricin (A Subunit), domain 2"/>
    <property type="match status" value="1"/>
</dbReference>
<dbReference type="InterPro" id="IPR036041">
    <property type="entry name" value="Ribosome-inact_prot_sf"/>
</dbReference>
<dbReference type="InterPro" id="IPR017989">
    <property type="entry name" value="Ribosome_inactivat_1/2"/>
</dbReference>
<dbReference type="InterPro" id="IPR001574">
    <property type="entry name" value="Ribosome_inactivat_prot"/>
</dbReference>
<dbReference type="InterPro" id="IPR017988">
    <property type="entry name" value="Ribosome_inactivat_prot_CS"/>
</dbReference>
<dbReference type="InterPro" id="IPR016138">
    <property type="entry name" value="Ribosome_inactivat_prot_sub1"/>
</dbReference>
<dbReference type="InterPro" id="IPR016139">
    <property type="entry name" value="Ribosome_inactivat_prot_sub2"/>
</dbReference>
<dbReference type="PANTHER" id="PTHR33453">
    <property type="match status" value="1"/>
</dbReference>
<dbReference type="PANTHER" id="PTHR33453:SF34">
    <property type="entry name" value="RIBOSOME-INACTIVATING PROTEIN"/>
    <property type="match status" value="1"/>
</dbReference>
<dbReference type="Pfam" id="PF00161">
    <property type="entry name" value="RIP"/>
    <property type="match status" value="1"/>
</dbReference>
<dbReference type="PRINTS" id="PR00396">
    <property type="entry name" value="SHIGARICIN"/>
</dbReference>
<dbReference type="SUPFAM" id="SSF56371">
    <property type="entry name" value="Ribosome inactivating proteins (RIP)"/>
    <property type="match status" value="1"/>
</dbReference>
<dbReference type="PROSITE" id="PS00275">
    <property type="entry name" value="SHIGA_RICIN"/>
    <property type="match status" value="1"/>
</dbReference>
<organism>
    <name type="scientific">Saponaria officinalis</name>
    <name type="common">Common soapwort</name>
    <name type="synonym">Lychnis saponaria</name>
    <dbReference type="NCBI Taxonomy" id="3572"/>
    <lineage>
        <taxon>Eukaryota</taxon>
        <taxon>Viridiplantae</taxon>
        <taxon>Streptophyta</taxon>
        <taxon>Embryophyta</taxon>
        <taxon>Tracheophyta</taxon>
        <taxon>Spermatophyta</taxon>
        <taxon>Magnoliopsida</taxon>
        <taxon>eudicotyledons</taxon>
        <taxon>Gunneridae</taxon>
        <taxon>Pentapetalae</taxon>
        <taxon>Caryophyllales</taxon>
        <taxon>Caryophyllaceae</taxon>
        <taxon>Caryophylleae</taxon>
        <taxon>Saponaria</taxon>
    </lineage>
</organism>
<keyword id="KW-0378">Hydrolase</keyword>
<keyword id="KW-0611">Plant defense</keyword>
<keyword id="KW-0652">Protein synthesis inhibitor</keyword>
<keyword id="KW-0800">Toxin</keyword>
<protein>
    <recommendedName>
        <fullName>Ribosome-inactivating protein saporin-3</fullName>
        <shortName>SAP-3</shortName>
        <shortName>SO-3</shortName>
        <ecNumber>3.2.2.22</ecNumber>
    </recommendedName>
    <alternativeName>
        <fullName>rRNA N-glycosidase</fullName>
    </alternativeName>
</protein>